<comment type="function">
    <text evidence="2">Catalyzes the transfer of a glucuronic acid (GlcA) residue from UDP-glucuronate to mannose-alpha-1,3-glucose-beta-1,4-glucose-P-P-polyisoprenyl to form the lipid-linked tetrasaccharide GlcA-Man-Glc(2)-PP-Pol, with a glucuronic acid-beta-mannose linkage. Is involved in the biosynthesis of the exopolysaccharide xanthan, since it catalyzes the fourth glycosylation step in the assembly of the pentasaccharide-P-P-polyisoprenyl repeating unit of xanthan. Is unable to use the trisaccharide acceptor freed from the pyrophosphate lipid moiety. Does not show specificity for the lipidic portion of the acceptor. Shows diminished activity when tested with 6-O-acetyl-mannose-alpha-1,3-glucose-beta-1,4-glucose-P-P-polyisoprenyl, a putative intermediate in the synthesis of xanthan; this could indicate that acetylation of the internal mannose takes place after the formation of the GumK product.</text>
</comment>
<comment type="catalytic activity">
    <reaction evidence="2 3">
        <text>alpha-D-Man-(1-&gt;3)-beta-D-Glc-(1-&gt;4)-alpha-D-Glc-1-di-trans,octa-cis-undecaprenyl diphosphate + UDP-alpha-D-glucuronate = beta-D-GlcA-(1-&gt;2)-alpha-D-Man-(1-&gt;3)-beta-D-Glc-(1-&gt;4)-alpha-D-Glc-di-trans,octa-cis-undecaprenyl diphosphate + UDP + H(+)</text>
        <dbReference type="Rhea" id="RHEA:30631"/>
        <dbReference type="ChEBI" id="CHEBI:15378"/>
        <dbReference type="ChEBI" id="CHEBI:58052"/>
        <dbReference type="ChEBI" id="CHEBI:58223"/>
        <dbReference type="ChEBI" id="CHEBI:61227"/>
        <dbReference type="ChEBI" id="CHEBI:61252"/>
        <dbReference type="EC" id="2.4.1.264"/>
    </reaction>
</comment>
<comment type="biophysicochemical properties">
    <kinetics>
        <KM evidence="3">62 uM for UDP-glucuronate</KM>
        <KM evidence="3">198 uM for Man-Glc(2)-PP-Pol</KM>
        <Vmax evidence="3">116.0 pmol/min/ug enzyme</Vmax>
    </kinetics>
</comment>
<comment type="pathway">
    <text evidence="2">Glycan biosynthesis; xanthan biosynthesis.</text>
</comment>
<comment type="subcellular location">
    <subcellularLocation>
        <location evidence="2">Cell inner membrane</location>
        <topology evidence="2">Peripheral membrane protein</topology>
        <orientation evidence="2">Cytoplasmic side</orientation>
    </subcellularLocation>
</comment>
<comment type="disruption phenotype">
    <text evidence="2 4">Cells lacking this gene accumulate Man-alpha-1,3-Glc-beta-1,4-Glc-PP-polyisoprenyl, are unable to produce GlcA-Man-Glc(2)-PP-Pol, and show a decrease in xanthan production of more than 95%.</text>
</comment>
<comment type="similarity">
    <text evidence="5">Belongs to the glycosyltransferase 70 family.</text>
</comment>
<comment type="sequence caution" evidence="5">
    <conflict type="erroneous initiation">
        <sequence resource="EMBL-CDS" id="AAA86379"/>
    </conflict>
    <text>Truncated N-terminus.</text>
</comment>
<proteinExistence type="evidence at protein level"/>
<sequence length="400" mass="44438">MSVSPAAPASGIRRPCYLVLSAHDFRTPRRANIHFITDQLALRGTTRFFSLRYSRLSRMKGDMRLPLDDTANTVVSHNGVDCYLWRTTVHPFNTRRSWLRPVEDAMFRWYAAHPPKQLLDWMRESDVIVFESGIAVAFIELAKRVNPAAKLVYRASDGLSTINVASYIEREFDRVAPTLDVIALVSPAMAAEVASRDNVFHVGHGVDHNLDQLGDPSPYAEGIHAVAVGSMLFDPEFFVVASKAFPQVTFHVIGSGMGRHPGYGDNVIVYGEMKHAQTIGYIKHARFGIAPYASEQVPVYLADSSMKLLQYDFFGLPAVCPNAVVGPYKSRFGYTPGNADSVIAAITQALEAPRVRYRQCLNWSDTTDRVLDPRAYPETRLYPHPPTAAPQLSSEAALSH</sequence>
<keyword id="KW-0002">3D-structure</keyword>
<keyword id="KW-0119">Carbohydrate metabolism</keyword>
<keyword id="KW-0997">Cell inner membrane</keyword>
<keyword id="KW-1003">Cell membrane</keyword>
<keyword id="KW-0328">Glycosyltransferase</keyword>
<keyword id="KW-0472">Membrane</keyword>
<keyword id="KW-0808">Transferase</keyword>
<protein>
    <recommendedName>
        <fullName>UDP-glucuronate:glycolipid 2-beta-glucuronosyltransferase</fullName>
        <shortName>UDP-GlcA:glycolipid glucuronosyltransferase</shortName>
        <ecNumber evidence="2 3">2.4.1.264</ecNumber>
    </recommendedName>
    <alternativeName>
        <fullName>D-man-alpha-(1-&gt;3)-D-Glc-beta-(1-&gt;4)-D-Glc-alpha-1-diphosphoundecaprenol 2-beta-glucuronyltransferase</fullName>
    </alternativeName>
</protein>
<gene>
    <name type="primary">gumK</name>
</gene>
<organism>
    <name type="scientific">Xanthomonas campestris pv. campestris</name>
    <dbReference type="NCBI Taxonomy" id="340"/>
    <lineage>
        <taxon>Bacteria</taxon>
        <taxon>Pseudomonadati</taxon>
        <taxon>Pseudomonadota</taxon>
        <taxon>Gammaproteobacteria</taxon>
        <taxon>Lysobacterales</taxon>
        <taxon>Lysobacteraceae</taxon>
        <taxon>Xanthomonas</taxon>
    </lineage>
</organism>
<reference key="1">
    <citation type="submission" date="1995-04" db="EMBL/GenBank/DDBJ databases">
        <title>Recombinant-DNA mediated production of xanthan gum.</title>
        <authorList>
            <person name="Capage M.A."/>
            <person name="Doherty D.H."/>
            <person name="Betlach M.R."/>
            <person name="Vanderslice R.W."/>
        </authorList>
    </citation>
    <scope>NUCLEOTIDE SEQUENCE [GENOMIC DNA]</scope>
    <source>
        <strain>ATCC 13951 / NCIB 11803 / NRRL B-1459</strain>
    </source>
</reference>
<reference key="2">
    <citation type="journal article" date="2004" name="Glycobiology">
        <title>Functional characterization of GumK, a membrane-associated beta-glucuronosyltransferase from Xanthomonas campestris required for xanthan polysaccharide synthesis.</title>
        <authorList>
            <person name="Barreras M."/>
            <person name="Abdian P.L."/>
            <person name="Ielpi L."/>
        </authorList>
    </citation>
    <scope>NUCLEOTIDE SEQUENCE [GENOMIC DNA]</scope>
    <scope>IDENTIFICATION OF START SITE</scope>
    <scope>FUNCTION</scope>
    <scope>CATALYTIC ACTIVITY</scope>
    <scope>ROLE IN XANTHAN BIOSYNTHESIS</scope>
    <scope>SUBSTRATE SPECIFICITY</scope>
    <scope>SUBCELLULAR LOCATION</scope>
    <scope>DISRUPTION PHENOTYPE</scope>
    <scope>PATHWAY</scope>
    <source>
        <strain>ATCC 13951 / NCIB 11803 / NRRL B-1459</strain>
    </source>
</reference>
<reference key="3">
    <citation type="journal article" date="1998" name="J. Bacteriol.">
        <title>Xanthomonas campestris pv. campestris gum mutants: effects on xanthan biosynthesis and plant virulence.</title>
        <authorList>
            <person name="Katzen F."/>
            <person name="Ferreiro D.U."/>
            <person name="Oddo C.G."/>
            <person name="Ielmini M.V."/>
            <person name="Becker A."/>
            <person name="Puhler A."/>
            <person name="Ielpi L."/>
        </authorList>
    </citation>
    <scope>DISRUPTION PHENOTYPE</scope>
    <source>
        <strain>ATCC 13951 / NCIB 11803 / NRRL B-1459</strain>
    </source>
</reference>
<reference key="4">
    <citation type="journal article" date="2006" name="Acta Crystallogr. F">
        <title>Crystallization and preliminary crystallographic characterization of GumK, a membrane-associated glucuronosyltransferase from Xanthomonas campestris required for xanthan polysaccharide synthesis.</title>
        <authorList>
            <person name="Barreras M."/>
            <person name="Bianchet M.A."/>
            <person name="Ielpi L."/>
        </authorList>
    </citation>
    <scope>CRYSTALLIZATION</scope>
    <source>
        <strain>ATCC 13951 / NCIB 11803 / NRRL B-1459</strain>
    </source>
</reference>
<reference key="5">
    <citation type="journal article" date="2008" name="J. Biol. Chem.">
        <title>Structure and mechanism of GumK, a membrane-associated glucuronosyltransferase.</title>
        <authorList>
            <person name="Barreras M."/>
            <person name="Salinas S.R."/>
            <person name="Abdian P.L."/>
            <person name="Kampel M.A."/>
            <person name="Ielpi L."/>
        </authorList>
    </citation>
    <scope>X-RAY CRYSTALLOGRAPHY (1.90 ANGSTROMS) OF WILD-TYPE AND MUTANT ALA-157 APOENZYME AND IN COMPLEX WITH UDP</scope>
    <scope>CATALYTIC ACTIVITY</scope>
    <scope>KINETIC PARAMETERS</scope>
    <scope>MUTAGENESIS OF ASP-157; GLU-192; ASP-207; MET-231; ASP-234; GLU-272; TYR-292; LYS-307 AND GLN-310</scope>
    <scope>ACTIVE SITE</scope>
    <scope>CATALYTIC MECHANISM</scope>
    <source>
        <strain>ATCC 13951 / NCIB 11803 / NRRL B-1459</strain>
    </source>
</reference>
<evidence type="ECO:0000256" key="1">
    <source>
        <dbReference type="SAM" id="MobiDB-lite"/>
    </source>
</evidence>
<evidence type="ECO:0000269" key="2">
    <source>
    </source>
</evidence>
<evidence type="ECO:0000269" key="3">
    <source>
    </source>
</evidence>
<evidence type="ECO:0000269" key="4">
    <source>
    </source>
</evidence>
<evidence type="ECO:0000305" key="5"/>
<evidence type="ECO:0007829" key="6">
    <source>
        <dbReference type="PDB" id="2HY7"/>
    </source>
</evidence>
<dbReference type="EC" id="2.4.1.264" evidence="2 3"/>
<dbReference type="EMBL" id="U22511">
    <property type="protein sequence ID" value="AAA86379.1"/>
    <property type="status" value="ALT_INIT"/>
    <property type="molecule type" value="Genomic_DNA"/>
</dbReference>
<dbReference type="EMBL" id="AY170889">
    <property type="protein sequence ID" value="AAN86640.1"/>
    <property type="molecule type" value="Genomic_DNA"/>
</dbReference>
<dbReference type="PIR" id="S67860">
    <property type="entry name" value="S67860"/>
</dbReference>
<dbReference type="RefSeq" id="WP_011037586.1">
    <property type="nucleotide sequence ID" value="NZ_QVAK01000007.1"/>
</dbReference>
<dbReference type="PDB" id="2HY7">
    <property type="method" value="X-ray"/>
    <property type="resolution" value="1.90 A"/>
    <property type="chains" value="A=1-400"/>
</dbReference>
<dbReference type="PDB" id="2Q6V">
    <property type="method" value="X-ray"/>
    <property type="resolution" value="2.28 A"/>
    <property type="chains" value="A=1-400"/>
</dbReference>
<dbReference type="PDB" id="3CUY">
    <property type="method" value="X-ray"/>
    <property type="resolution" value="2.30 A"/>
    <property type="chains" value="A=1-400"/>
</dbReference>
<dbReference type="PDB" id="3CV3">
    <property type="method" value="X-ray"/>
    <property type="resolution" value="2.25 A"/>
    <property type="chains" value="A=1-400"/>
</dbReference>
<dbReference type="PDBsum" id="2HY7"/>
<dbReference type="PDBsum" id="2Q6V"/>
<dbReference type="PDBsum" id="3CUY"/>
<dbReference type="PDBsum" id="3CV3"/>
<dbReference type="SMR" id="Q8GCH2"/>
<dbReference type="CAZy" id="GT70">
    <property type="family name" value="Glycosyltransferase Family 70"/>
</dbReference>
<dbReference type="KEGG" id="ag:AAN86640"/>
<dbReference type="PATRIC" id="fig|340.15.peg.1854"/>
<dbReference type="BioCyc" id="MetaCyc:MONOMER-15982"/>
<dbReference type="BRENDA" id="2.4.1.264">
    <property type="organism ID" value="6708"/>
</dbReference>
<dbReference type="SABIO-RK" id="Q8GCH2"/>
<dbReference type="UniPathway" id="UPA01017"/>
<dbReference type="EvolutionaryTrace" id="Q8GCH2"/>
<dbReference type="GO" id="GO:0005886">
    <property type="term" value="C:plasma membrane"/>
    <property type="evidence" value="ECO:0000314"/>
    <property type="project" value="UniProtKB"/>
</dbReference>
<dbReference type="GO" id="GO:0015020">
    <property type="term" value="F:glucuronosyltransferase activity"/>
    <property type="evidence" value="ECO:0000314"/>
    <property type="project" value="UniProtKB"/>
</dbReference>
<dbReference type="GO" id="GO:0000271">
    <property type="term" value="P:polysaccharide biosynthetic process"/>
    <property type="evidence" value="ECO:0000315"/>
    <property type="project" value="UniProtKB"/>
</dbReference>
<dbReference type="FunFam" id="3.40.50.2000:FF:000273">
    <property type="entry name" value="UDP-glucuronate:glycolipid 2-beta-glucuronosyltransferase"/>
    <property type="match status" value="1"/>
</dbReference>
<dbReference type="Gene3D" id="3.40.50.11010">
    <property type="match status" value="1"/>
</dbReference>
<dbReference type="Gene3D" id="3.40.50.2000">
    <property type="entry name" value="Glycogen Phosphorylase B"/>
    <property type="match status" value="1"/>
</dbReference>
<dbReference type="InterPro" id="IPR054299">
    <property type="entry name" value="GumK_N"/>
</dbReference>
<dbReference type="Pfam" id="PF22059">
    <property type="entry name" value="GumK_N"/>
    <property type="match status" value="1"/>
</dbReference>
<dbReference type="SUPFAM" id="SSF53756">
    <property type="entry name" value="UDP-Glycosyltransferase/glycogen phosphorylase"/>
    <property type="match status" value="1"/>
</dbReference>
<accession>Q8GCH2</accession>
<accession>Q56777</accession>
<name>GUMK_XANCE</name>
<feature type="chain" id="PRO_0000414019" description="UDP-glucuronate:glycolipid 2-beta-glucuronosyltransferase">
    <location>
        <begin position="1"/>
        <end position="400"/>
    </location>
</feature>
<feature type="region of interest" description="Disordered" evidence="1">
    <location>
        <begin position="377"/>
        <end position="400"/>
    </location>
</feature>
<feature type="compositionally biased region" description="Polar residues" evidence="1">
    <location>
        <begin position="390"/>
        <end position="400"/>
    </location>
</feature>
<feature type="active site" description="Proton acceptor" evidence="3">
    <location>
        <position position="157"/>
    </location>
</feature>
<feature type="binding site">
    <location>
        <begin position="230"/>
        <end position="231"/>
    </location>
    <ligand>
        <name>UDP-alpha-D-glucuronate</name>
        <dbReference type="ChEBI" id="CHEBI:58052"/>
    </ligand>
</feature>
<feature type="binding site">
    <location>
        <begin position="272"/>
        <end position="273"/>
    </location>
    <ligand>
        <name>UDP-alpha-D-glucuronate</name>
        <dbReference type="ChEBI" id="CHEBI:58052"/>
    </ligand>
</feature>
<feature type="binding site" evidence="3">
    <location>
        <position position="292"/>
    </location>
    <ligand>
        <name>UDP-alpha-D-glucuronate</name>
        <dbReference type="ChEBI" id="CHEBI:58052"/>
    </ligand>
</feature>
<feature type="binding site">
    <location>
        <begin position="306"/>
        <end position="310"/>
    </location>
    <ligand>
        <name>UDP-alpha-D-glucuronate</name>
        <dbReference type="ChEBI" id="CHEBI:58052"/>
    </ligand>
</feature>
<feature type="mutagenesis site" description="Loss of catalytic activity. Loss of xanthan production." evidence="3">
    <original>D</original>
    <variation>A</variation>
    <variation>E</variation>
    <variation>N</variation>
    <location>
        <position position="157"/>
    </location>
</feature>
<feature type="mutagenesis site" description="No effect on both substrate affinity and catalytic activity." evidence="3">
    <original>E</original>
    <variation>A</variation>
    <location>
        <position position="192"/>
    </location>
</feature>
<feature type="mutagenesis site" description="No effect on both substrate affinity and catalytic activity." evidence="3">
    <original>D</original>
    <variation>A</variation>
    <location>
        <position position="207"/>
    </location>
</feature>
<feature type="mutagenesis site" description="No effect on both substrate affinity and catalytic activity." evidence="3">
    <original>M</original>
    <variation>A</variation>
    <location>
        <position position="231"/>
    </location>
</feature>
<feature type="mutagenesis site" description="No effect on both substrate affinity and catalytic activity." evidence="3">
    <original>D</original>
    <variation>A</variation>
    <location>
        <position position="234"/>
    </location>
</feature>
<feature type="mutagenesis site" description="2-fold decrease in both affinity for UDP-GlcA and catalytic activity." evidence="3">
    <original>E</original>
    <variation>A</variation>
    <location>
        <position position="272"/>
    </location>
</feature>
<feature type="mutagenesis site" description="14-fold decrease in catalytic efficiency. 25% of wild-type xanthan production." evidence="3">
    <original>Y</original>
    <variation>A</variation>
    <location>
        <position position="292"/>
    </location>
</feature>
<feature type="mutagenesis site" description="54-fold decrease in catalytic efficiency. 30% of wild-type xanthan production." evidence="3">
    <original>K</original>
    <variation>A</variation>
    <location>
        <position position="307"/>
    </location>
</feature>
<feature type="mutagenesis site" description="19-fold decrease in affinity for UDP-GlcA but no effect on catalytic activity. 60% of wild-type xanthan production." evidence="3">
    <original>Q</original>
    <variation>A</variation>
    <location>
        <position position="310"/>
    </location>
</feature>
<feature type="sequence conflict" description="In Ref. 2; AAN86640/AAA86379." evidence="5" ref="2">
    <original>S</original>
    <variation>G</variation>
    <location>
        <position position="2"/>
    </location>
</feature>
<feature type="sequence conflict" description="In Ref. 2; AAN86640/AAA86379." evidence="5" ref="2">
    <original>A</original>
    <variation>S</variation>
    <location>
        <position position="22"/>
    </location>
</feature>
<feature type="sequence conflict" description="In Ref. 2; AAN86640/AAA86379." evidence="5" ref="2">
    <original>A</original>
    <variation>V</variation>
    <location>
        <position position="194"/>
    </location>
</feature>
<feature type="strand" evidence="6">
    <location>
        <begin position="17"/>
        <end position="23"/>
    </location>
</feature>
<feature type="strand" evidence="6">
    <location>
        <begin position="27"/>
        <end position="29"/>
    </location>
</feature>
<feature type="helix" evidence="6">
    <location>
        <begin position="32"/>
        <end position="43"/>
    </location>
</feature>
<feature type="strand" evidence="6">
    <location>
        <begin position="46"/>
        <end position="50"/>
    </location>
</feature>
<feature type="helix" evidence="6">
    <location>
        <begin position="57"/>
        <end position="60"/>
    </location>
</feature>
<feature type="helix" evidence="6">
    <location>
        <begin position="65"/>
        <end position="70"/>
    </location>
</feature>
<feature type="strand" evidence="6">
    <location>
        <begin position="73"/>
        <end position="77"/>
    </location>
</feature>
<feature type="strand" evidence="6">
    <location>
        <begin position="80"/>
        <end position="84"/>
    </location>
</feature>
<feature type="strand" evidence="6">
    <location>
        <begin position="87"/>
        <end position="89"/>
    </location>
</feature>
<feature type="helix" evidence="6">
    <location>
        <begin position="97"/>
        <end position="99"/>
    </location>
</feature>
<feature type="helix" evidence="6">
    <location>
        <begin position="100"/>
        <end position="112"/>
    </location>
</feature>
<feature type="helix" evidence="6">
    <location>
        <begin position="116"/>
        <end position="124"/>
    </location>
</feature>
<feature type="strand" evidence="6">
    <location>
        <begin position="126"/>
        <end position="133"/>
    </location>
</feature>
<feature type="helix" evidence="6">
    <location>
        <begin position="134"/>
        <end position="138"/>
    </location>
</feature>
<feature type="helix" evidence="6">
    <location>
        <begin position="139"/>
        <end position="145"/>
    </location>
</feature>
<feature type="strand" evidence="6">
    <location>
        <begin position="149"/>
        <end position="157"/>
    </location>
</feature>
<feature type="helix" evidence="6">
    <location>
        <begin position="159"/>
        <end position="162"/>
    </location>
</feature>
<feature type="helix" evidence="6">
    <location>
        <begin position="166"/>
        <end position="175"/>
    </location>
</feature>
<feature type="helix" evidence="6">
    <location>
        <begin position="176"/>
        <end position="178"/>
    </location>
</feature>
<feature type="strand" evidence="6">
    <location>
        <begin position="180"/>
        <end position="185"/>
    </location>
</feature>
<feature type="helix" evidence="6">
    <location>
        <begin position="187"/>
        <end position="192"/>
    </location>
</feature>
<feature type="strand" evidence="6">
    <location>
        <begin position="199"/>
        <end position="201"/>
    </location>
</feature>
<feature type="helix" evidence="6">
    <location>
        <begin position="210"/>
        <end position="214"/>
    </location>
</feature>
<feature type="strand" evidence="6">
    <location>
        <begin position="221"/>
        <end position="228"/>
    </location>
</feature>
<feature type="helix" evidence="6">
    <location>
        <begin position="235"/>
        <end position="244"/>
    </location>
</feature>
<feature type="strand" evidence="6">
    <location>
        <begin position="248"/>
        <end position="254"/>
    </location>
</feature>
<feature type="strand" evidence="6">
    <location>
        <begin position="267"/>
        <end position="270"/>
    </location>
</feature>
<feature type="helix" evidence="6">
    <location>
        <begin position="275"/>
        <end position="283"/>
    </location>
</feature>
<feature type="strand" evidence="6">
    <location>
        <begin position="286"/>
        <end position="289"/>
    </location>
</feature>
<feature type="helix" evidence="6">
    <location>
        <begin position="301"/>
        <end position="304"/>
    </location>
</feature>
<feature type="helix" evidence="6">
    <location>
        <begin position="306"/>
        <end position="313"/>
    </location>
</feature>
<feature type="strand" evidence="6">
    <location>
        <begin position="318"/>
        <end position="321"/>
    </location>
</feature>
<feature type="helix" evidence="6">
    <location>
        <begin position="322"/>
        <end position="324"/>
    </location>
</feature>
<feature type="strand" evidence="6">
    <location>
        <begin position="329"/>
        <end position="334"/>
    </location>
</feature>
<feature type="helix" evidence="6">
    <location>
        <begin position="339"/>
        <end position="351"/>
    </location>
</feature>
<feature type="helix" evidence="6">
    <location>
        <begin position="363"/>
        <end position="371"/>
    </location>
</feature>
<feature type="helix" evidence="6">
    <location>
        <begin position="373"/>
        <end position="375"/>
    </location>
</feature>
<feature type="helix" evidence="6">
    <location>
        <begin position="377"/>
        <end position="379"/>
    </location>
</feature>
<feature type="strand" evidence="6">
    <location>
        <begin position="380"/>
        <end position="382"/>
    </location>
</feature>